<reference key="1">
    <citation type="journal article" date="2002" name="J. Gen. Virol.">
        <title>Full-length genome analysis of natural isolates of vesicular stomatitis virus (Indiana 1 serotype) from North, Central and South America.</title>
        <authorList>
            <person name="Rodriguez L.L."/>
            <person name="Pauszek S.J."/>
            <person name="Bunch T.A."/>
            <person name="Schumann K.R."/>
        </authorList>
    </citation>
    <scope>NUCLEOTIDE SEQUENCE [GENOMIC RNA]</scope>
</reference>
<keyword id="KW-0024">Alternative initiation</keyword>
<keyword id="KW-0053">Apoptosis</keyword>
<keyword id="KW-1262">Eukaryotic host gene expression shutoff by virus</keyword>
<keyword id="KW-1035">Host cytoplasm</keyword>
<keyword id="KW-1190">Host gene expression shutoff by virus</keyword>
<keyword id="KW-1043">Host membrane</keyword>
<keyword id="KW-1192">Host mRNA suppression by virus</keyword>
<keyword id="KW-1048">Host nucleus</keyword>
<keyword id="KW-0945">Host-virus interaction</keyword>
<keyword id="KW-1099">Inhibition of host mRNA nuclear export by virus</keyword>
<keyword id="KW-0472">Membrane</keyword>
<keyword id="KW-0597">Phosphoprotein</keyword>
<keyword id="KW-1198">Viral budding</keyword>
<keyword id="KW-1187">Viral budding via the host ESCRT complexes</keyword>
<keyword id="KW-0468">Viral matrix protein</keyword>
<keyword id="KW-1188">Viral release from host cell</keyword>
<keyword id="KW-0946">Virion</keyword>
<feature type="chain" id="PRO_0000287259" description="Matrix protein">
    <location>
        <begin position="1"/>
        <end position="229"/>
    </location>
</feature>
<feature type="region of interest" description="Disordered" evidence="3">
    <location>
        <begin position="1"/>
        <end position="23"/>
    </location>
</feature>
<feature type="short sequence motif" description="dynamin binding" evidence="1">
    <location>
        <begin position="2"/>
        <end position="4"/>
    </location>
</feature>
<feature type="short sequence motif" description="PPXY motif" evidence="1">
    <location>
        <begin position="24"/>
        <end position="27"/>
    </location>
</feature>
<feature type="short sequence motif" description="PTAP/PSAP motif" evidence="1">
    <location>
        <begin position="37"/>
        <end position="40"/>
    </location>
</feature>
<feature type="compositionally biased region" description="Low complexity" evidence="3">
    <location>
        <begin position="1"/>
        <end position="10"/>
    </location>
</feature>
<feature type="splice variant" id="VSP_025416" description="In isoform M3." evidence="4">
    <location>
        <begin position="1"/>
        <end position="50"/>
    </location>
</feature>
<feature type="splice variant" id="VSP_025417" description="In isoform M2." evidence="4">
    <location>
        <begin position="1"/>
        <end position="32"/>
    </location>
</feature>
<proteinExistence type="evidence at protein level"/>
<name>MATRX_VSIVN</name>
<organism>
    <name type="scientific">Vesicular stomatitis Indiana virus (strain 98COE North America)</name>
    <name type="common">VSIV</name>
    <dbReference type="NCBI Taxonomy" id="434488"/>
    <lineage>
        <taxon>Viruses</taxon>
        <taxon>Riboviria</taxon>
        <taxon>Orthornavirae</taxon>
        <taxon>Negarnaviricota</taxon>
        <taxon>Haploviricotina</taxon>
        <taxon>Monjiviricetes</taxon>
        <taxon>Mononegavirales</taxon>
        <taxon>Rhabdoviridae</taxon>
        <taxon>Alpharhabdovirinae</taxon>
        <taxon>Vesiculovirus</taxon>
        <taxon>Vesiculovirus indiana</taxon>
    </lineage>
</organism>
<evidence type="ECO:0000250" key="1">
    <source>
        <dbReference type="UniProtKB" id="P03519"/>
    </source>
</evidence>
<evidence type="ECO:0000250" key="2">
    <source>
        <dbReference type="UniProtKB" id="P08325"/>
    </source>
</evidence>
<evidence type="ECO:0000256" key="3">
    <source>
        <dbReference type="SAM" id="MobiDB-lite"/>
    </source>
</evidence>
<evidence type="ECO:0000305" key="4"/>
<sequence length="229" mass="26020">MSSLKKILGLKGKGKKSKKLGIAPPPYEEDTSMEYAPSAPIDKSYFGVDEMDTHDPNQLRYEKFFFTVKLTVRSNRPFRTYSDVAAAVSHWDHMYIGMAGKRPFYKILAFLGSSNLKATPAVLADQGQPEYHAHCEGRAYLPHRMGKTPPMLNVPEHFRRPFNIGLYKGTIELTMTIYDDESLEAAPMIWDHFNSSKFSDFREKALMFGLIVEKKASGAWILDSVSHFK</sequence>
<dbReference type="EMBL" id="AF473864">
    <property type="protein sequence ID" value="AAN16982.1"/>
    <property type="molecule type" value="Genomic_RNA"/>
</dbReference>
<dbReference type="SMR" id="Q8B0I2"/>
<dbReference type="IntAct" id="Q8B0I2">
    <property type="interactions" value="4"/>
</dbReference>
<dbReference type="Proteomes" id="UP000007624">
    <property type="component" value="Segment"/>
</dbReference>
<dbReference type="GO" id="GO:0030430">
    <property type="term" value="C:host cell cytoplasm"/>
    <property type="evidence" value="ECO:0007669"/>
    <property type="project" value="UniProtKB-SubCell"/>
</dbReference>
<dbReference type="GO" id="GO:0044200">
    <property type="term" value="C:host cell nuclear membrane"/>
    <property type="evidence" value="ECO:0007669"/>
    <property type="project" value="UniProtKB-SubCell"/>
</dbReference>
<dbReference type="GO" id="GO:0016020">
    <property type="term" value="C:membrane"/>
    <property type="evidence" value="ECO:0007669"/>
    <property type="project" value="UniProtKB-KW"/>
</dbReference>
<dbReference type="GO" id="GO:0019031">
    <property type="term" value="C:viral envelope"/>
    <property type="evidence" value="ECO:0007669"/>
    <property type="project" value="InterPro"/>
</dbReference>
<dbReference type="GO" id="GO:0039660">
    <property type="term" value="F:structural constituent of virion"/>
    <property type="evidence" value="ECO:0007669"/>
    <property type="project" value="UniProtKB-KW"/>
</dbReference>
<dbReference type="GO" id="GO:0039522">
    <property type="term" value="P:symbiont-mediated suppression of host mRNA export from nucleus"/>
    <property type="evidence" value="ECO:0007669"/>
    <property type="project" value="UniProtKB-KW"/>
</dbReference>
<dbReference type="GO" id="GO:0039602">
    <property type="term" value="P:symbiont-mediated suppression of host transcription initiation from RNA polymerase II promoter"/>
    <property type="evidence" value="ECO:0000250"/>
    <property type="project" value="UniProtKB"/>
</dbReference>
<dbReference type="GO" id="GO:0039702">
    <property type="term" value="P:viral budding via host ESCRT complex"/>
    <property type="evidence" value="ECO:0007669"/>
    <property type="project" value="UniProtKB-KW"/>
</dbReference>
<dbReference type="FunFam" id="3.10.460.10:FF:000001">
    <property type="entry name" value="Matrix protein"/>
    <property type="match status" value="1"/>
</dbReference>
<dbReference type="Gene3D" id="3.10.460.10">
    <property type="entry name" value="VSV matrix protein"/>
    <property type="match status" value="1"/>
</dbReference>
<dbReference type="InterPro" id="IPR009397">
    <property type="entry name" value="Vesiculo_matrix"/>
</dbReference>
<dbReference type="InterPro" id="IPR036711">
    <property type="entry name" value="VSV_matrix_sf"/>
</dbReference>
<dbReference type="Pfam" id="PF06326">
    <property type="entry name" value="Vesiculo_matrix"/>
    <property type="match status" value="1"/>
</dbReference>
<dbReference type="SUPFAM" id="SSF75404">
    <property type="entry name" value="VSV matrix protein"/>
    <property type="match status" value="1"/>
</dbReference>
<accession>Q8B0I2</accession>
<gene>
    <name type="primary">M</name>
</gene>
<organismHost>
    <name type="scientific">Aedes</name>
    <dbReference type="NCBI Taxonomy" id="7158"/>
</organismHost>
<organismHost>
    <name type="scientific">Bos taurus</name>
    <name type="common">Bovine</name>
    <dbReference type="NCBI Taxonomy" id="9913"/>
</organismHost>
<organismHost>
    <name type="scientific">Culicoides</name>
    <dbReference type="NCBI Taxonomy" id="58271"/>
</organismHost>
<organismHost>
    <name type="scientific">Equus asinus</name>
    <name type="common">Donkey</name>
    <name type="synonym">Equus africanus asinus</name>
    <dbReference type="NCBI Taxonomy" id="9793"/>
</organismHost>
<organismHost>
    <name type="scientific">Equus caballus</name>
    <name type="common">Horse</name>
    <dbReference type="NCBI Taxonomy" id="9796"/>
</organismHost>
<organismHost>
    <name type="scientific">Homo sapiens</name>
    <name type="common">Human</name>
    <dbReference type="NCBI Taxonomy" id="9606"/>
</organismHost>
<organismHost>
    <name type="scientific">Lutzomyia</name>
    <dbReference type="NCBI Taxonomy" id="252607"/>
</organismHost>
<organismHost>
    <name type="scientific">Musca domestica</name>
    <name type="common">House fly</name>
    <dbReference type="NCBI Taxonomy" id="7370"/>
</organismHost>
<organismHost>
    <name type="scientific">Simuliidae</name>
    <name type="common">black flies</name>
    <dbReference type="NCBI Taxonomy" id="7190"/>
</organismHost>
<organismHost>
    <name type="scientific">Sus scrofa</name>
    <name type="common">Pig</name>
    <dbReference type="NCBI Taxonomy" id="9823"/>
</organismHost>
<comment type="function">
    <text evidence="1">Forms a double layer around the helical nucleocapsid, the inner matrix layer binding to the N helix and the outer matrix layer binding to the envelope glycoprotein. Plays a major role in assembly and budding of virion, by recruiting cellular partners of the ESCRT complexes that play a key role in releasing the budding particle from the host membrane. Condensates the ribonucleocapsid core during virus assembly. Inhibits the host mRNA nuclear export thereby inducing the shut off of cellular transcription and preventing the interferon signaling and the establishment of antiviral state in infected cells. This shutoff presumably inhibits interferon signaling and thus establishment of antiviral state in virus infected cells. Induces cell-rounding, cytoskeleton disorganization and apoptosis in infected cell. Inhibits host transcription, possibly through interaction with host DNA repair factor IIH/TFIIH GTF2H5 subunit.</text>
</comment>
<comment type="subunit">
    <text evidence="1 2">Homomultimer. Interacts with viral nucleocapsid; this interaction contributes to the virion assembly (By similarity). Interacts with the viral envelope glycoprotein; this interaction contributes to the virion assembly (By similarity). Interacts with host RAE1-NUP98 complex. Interacts with host NEDD4 and TSG101. Interacts with host dynamin. Interacts with host NDUFAF4; the interaction inhibits viral propagation and is independent of interferon activation. Interacts with host GTF2H5; the interaction may inhibit host transcription (By similarity).</text>
</comment>
<comment type="interaction">
    <interactant intactId="EBI-40246247">
        <id>Q8B0I2</id>
    </interactant>
    <interactant intactId="EBI-1564678">
        <id>Q96J02</id>
        <label>ITCH</label>
    </interactant>
    <organismsDiffer>true</organismsDiffer>
    <experiments>2</experiments>
</comment>
<comment type="subcellular location">
    <subcellularLocation>
        <location evidence="1">Virion</location>
    </subcellularLocation>
    <subcellularLocation>
        <location evidence="1">Host endomembrane system</location>
        <topology evidence="1">Peripheral membrane protein</topology>
    </subcellularLocation>
    <subcellularLocation>
        <location evidence="1">Host nucleus membrane</location>
        <topology evidence="1">Peripheral membrane protein</topology>
    </subcellularLocation>
    <subcellularLocation>
        <location evidence="1">Host nucleus</location>
    </subcellularLocation>
    <subcellularLocation>
        <location evidence="1">Host cytoplasm</location>
    </subcellularLocation>
    <text evidence="1">In the virion, forms a double layer around the helical nucleocapsid, the inner matrix layer binding to the N helix and the outer matrix layer binding to the envelope glycoprotein. About 2480 copies of M are present in the virion.</text>
</comment>
<comment type="alternative products">
    <event type="alternative initiation"/>
    <isoform>
        <id>Q8B0I2-1</id>
        <name>M</name>
        <sequence type="displayed"/>
    </isoform>
    <isoform>
        <id>Q8B0I2-2</id>
        <name>M2</name>
        <sequence type="described" ref="VSP_025417"/>
    </isoform>
    <isoform>
        <id>Q8B0I2-3</id>
        <name>M3</name>
        <sequence type="described" ref="VSP_025416"/>
    </isoform>
</comment>
<comment type="domain">
    <text evidence="1">Late-budding domains (L domains) are short sequence motifs essential for viral particle budding. They recruit proteins of the host ESCRT machinery (Endosomal Sorting Complex Required for Transport) or ESCRT-associated proteins. M contains two overlapping L domains: a PPXY motif which interacts with the WW domain 3 of NEDD4 and a PTAP/PSAP motif, which interacts with the UEV domain of TSG101.</text>
</comment>
<comment type="PTM">
    <text evidence="1">Phosphorylated by host.</text>
</comment>
<comment type="biotechnology">
    <text>VSV is used as an oncolytic agent for cancer therapy, because of his wide host range, rapid replication and mild pathogenicity in humans. VSV used are mutated at M51R in their matrix protein. These mutated viruses cannot successfully infect normal cells, being unable to counteract the antiviral state induced by interferon-alpha in normal cells. Cancer cells are impeded with responsiveness to interferon, and then can be successfully infected and lysed by the virus.</text>
</comment>
<comment type="similarity">
    <text evidence="4">Belongs to the vesiculoviruses matrix protein family.</text>
</comment>
<protein>
    <recommendedName>
        <fullName evidence="1">Matrix protein</fullName>
        <shortName evidence="1">M protein</shortName>
    </recommendedName>
</protein>